<dbReference type="EMBL" id="CP000890">
    <property type="protein sequence ID" value="ABX78421.1"/>
    <property type="molecule type" value="Genomic_DNA"/>
</dbReference>
<dbReference type="RefSeq" id="WP_012220136.1">
    <property type="nucleotide sequence ID" value="NC_010117.1"/>
</dbReference>
<dbReference type="SMR" id="A9NAN1"/>
<dbReference type="KEGG" id="cbs:COXBURSA331_A0344"/>
<dbReference type="HOGENOM" id="CLU_078858_2_1_6"/>
<dbReference type="GO" id="GO:0022625">
    <property type="term" value="C:cytosolic large ribosomal subunit"/>
    <property type="evidence" value="ECO:0007669"/>
    <property type="project" value="TreeGrafter"/>
</dbReference>
<dbReference type="GO" id="GO:0019843">
    <property type="term" value="F:rRNA binding"/>
    <property type="evidence" value="ECO:0007669"/>
    <property type="project" value="UniProtKB-UniRule"/>
</dbReference>
<dbReference type="GO" id="GO:0003735">
    <property type="term" value="F:structural constituent of ribosome"/>
    <property type="evidence" value="ECO:0007669"/>
    <property type="project" value="InterPro"/>
</dbReference>
<dbReference type="GO" id="GO:0000049">
    <property type="term" value="F:tRNA binding"/>
    <property type="evidence" value="ECO:0007669"/>
    <property type="project" value="UniProtKB-KW"/>
</dbReference>
<dbReference type="GO" id="GO:0006412">
    <property type="term" value="P:translation"/>
    <property type="evidence" value="ECO:0007669"/>
    <property type="project" value="UniProtKB-UniRule"/>
</dbReference>
<dbReference type="CDD" id="cd01433">
    <property type="entry name" value="Ribosomal_L16_L10e"/>
    <property type="match status" value="1"/>
</dbReference>
<dbReference type="FunFam" id="3.90.1170.10:FF:000001">
    <property type="entry name" value="50S ribosomal protein L16"/>
    <property type="match status" value="1"/>
</dbReference>
<dbReference type="Gene3D" id="3.90.1170.10">
    <property type="entry name" value="Ribosomal protein L10e/L16"/>
    <property type="match status" value="1"/>
</dbReference>
<dbReference type="HAMAP" id="MF_01342">
    <property type="entry name" value="Ribosomal_uL16"/>
    <property type="match status" value="1"/>
</dbReference>
<dbReference type="InterPro" id="IPR047873">
    <property type="entry name" value="Ribosomal_uL16"/>
</dbReference>
<dbReference type="InterPro" id="IPR000114">
    <property type="entry name" value="Ribosomal_uL16_bact-type"/>
</dbReference>
<dbReference type="InterPro" id="IPR016180">
    <property type="entry name" value="Ribosomal_uL16_dom"/>
</dbReference>
<dbReference type="InterPro" id="IPR036920">
    <property type="entry name" value="Ribosomal_uL16_sf"/>
</dbReference>
<dbReference type="NCBIfam" id="TIGR01164">
    <property type="entry name" value="rplP_bact"/>
    <property type="match status" value="1"/>
</dbReference>
<dbReference type="PANTHER" id="PTHR12220">
    <property type="entry name" value="50S/60S RIBOSOMAL PROTEIN L16"/>
    <property type="match status" value="1"/>
</dbReference>
<dbReference type="PANTHER" id="PTHR12220:SF13">
    <property type="entry name" value="LARGE RIBOSOMAL SUBUNIT PROTEIN UL16M"/>
    <property type="match status" value="1"/>
</dbReference>
<dbReference type="Pfam" id="PF00252">
    <property type="entry name" value="Ribosomal_L16"/>
    <property type="match status" value="1"/>
</dbReference>
<dbReference type="PRINTS" id="PR00060">
    <property type="entry name" value="RIBOSOMALL16"/>
</dbReference>
<dbReference type="SUPFAM" id="SSF54686">
    <property type="entry name" value="Ribosomal protein L16p/L10e"/>
    <property type="match status" value="1"/>
</dbReference>
<sequence length="137" mass="15513">MLQPSNRKYRKDFKGRNRGIASRGNRVSFGEFGLKATECARITARQLEAARRTIARHIKRGGKITIRIFPDKPITKKPLEVRQGKGKGSVEYWVALVQPGRMIFEIEGVDEALAREAFSRAAAKLPLKCLFVKRTVM</sequence>
<feature type="chain" id="PRO_1000086752" description="Large ribosomal subunit protein uL16">
    <location>
        <begin position="1"/>
        <end position="137"/>
    </location>
</feature>
<evidence type="ECO:0000255" key="1">
    <source>
        <dbReference type="HAMAP-Rule" id="MF_01342"/>
    </source>
</evidence>
<evidence type="ECO:0000305" key="2"/>
<reference key="1">
    <citation type="submission" date="2007-11" db="EMBL/GenBank/DDBJ databases">
        <title>Genome sequencing of phylogenetically and phenotypically diverse Coxiella burnetii isolates.</title>
        <authorList>
            <person name="Seshadri R."/>
            <person name="Samuel J.E."/>
        </authorList>
    </citation>
    <scope>NUCLEOTIDE SEQUENCE [LARGE SCALE GENOMIC DNA]</scope>
    <source>
        <strain>RSA 331 / Henzerling II</strain>
    </source>
</reference>
<name>RL16_COXBR</name>
<accession>A9NAN1</accession>
<keyword id="KW-0687">Ribonucleoprotein</keyword>
<keyword id="KW-0689">Ribosomal protein</keyword>
<keyword id="KW-0694">RNA-binding</keyword>
<keyword id="KW-0699">rRNA-binding</keyword>
<keyword id="KW-0820">tRNA-binding</keyword>
<organism>
    <name type="scientific">Coxiella burnetii (strain RSA 331 / Henzerling II)</name>
    <dbReference type="NCBI Taxonomy" id="360115"/>
    <lineage>
        <taxon>Bacteria</taxon>
        <taxon>Pseudomonadati</taxon>
        <taxon>Pseudomonadota</taxon>
        <taxon>Gammaproteobacteria</taxon>
        <taxon>Legionellales</taxon>
        <taxon>Coxiellaceae</taxon>
        <taxon>Coxiella</taxon>
    </lineage>
</organism>
<gene>
    <name evidence="1" type="primary">rplP</name>
    <name type="ordered locus">COXBURSA331_A0344</name>
</gene>
<proteinExistence type="inferred from homology"/>
<protein>
    <recommendedName>
        <fullName evidence="1">Large ribosomal subunit protein uL16</fullName>
    </recommendedName>
    <alternativeName>
        <fullName evidence="2">50S ribosomal protein L16</fullName>
    </alternativeName>
</protein>
<comment type="function">
    <text evidence="1">Binds 23S rRNA and is also seen to make contacts with the A and possibly P site tRNAs.</text>
</comment>
<comment type="subunit">
    <text evidence="1">Part of the 50S ribosomal subunit.</text>
</comment>
<comment type="similarity">
    <text evidence="1">Belongs to the universal ribosomal protein uL16 family.</text>
</comment>